<accession>Q8H8V7</accession>
<accession>A0A0P0VW96</accession>
<keyword id="KW-0067">ATP-binding</keyword>
<keyword id="KW-1003">Cell membrane</keyword>
<keyword id="KW-0217">Developmental protein</keyword>
<keyword id="KW-0472">Membrane</keyword>
<keyword id="KW-0547">Nucleotide-binding</keyword>
<keyword id="KW-1185">Reference proteome</keyword>
<keyword id="KW-0346">Stress response</keyword>
<keyword id="KW-0812">Transmembrane</keyword>
<keyword id="KW-1133">Transmembrane helix</keyword>
<keyword id="KW-0813">Transport</keyword>
<protein>
    <recommendedName>
        <fullName evidence="9">ABC transporter G family member 5</fullName>
        <shortName evidence="9">ABC transporter ABCG.5</shortName>
        <shortName evidence="9">OsABCG5</shortName>
    </recommendedName>
    <alternativeName>
        <fullName evidence="10">Protein REDUCED CULM NUMBER 1</fullName>
    </alternativeName>
    <alternativeName>
        <fullName evidence="11">White-brown complex homolog protein 5</fullName>
        <shortName evidence="11">OsWBC5</shortName>
    </alternativeName>
</protein>
<dbReference type="EMBL" id="AC084405">
    <property type="protein sequence ID" value="AAN64474.1"/>
    <property type="molecule type" value="Genomic_DNA"/>
</dbReference>
<dbReference type="EMBL" id="DP000009">
    <property type="protein sequence ID" value="ABF95316.1"/>
    <property type="molecule type" value="Genomic_DNA"/>
</dbReference>
<dbReference type="EMBL" id="AP008209">
    <property type="protein sequence ID" value="BAF11660.1"/>
    <property type="molecule type" value="Genomic_DNA"/>
</dbReference>
<dbReference type="EMBL" id="AP014959">
    <property type="protein sequence ID" value="BAS83580.1"/>
    <property type="molecule type" value="Genomic_DNA"/>
</dbReference>
<dbReference type="EMBL" id="CM000140">
    <property type="protein sequence ID" value="EAZ26487.1"/>
    <property type="molecule type" value="Genomic_DNA"/>
</dbReference>
<dbReference type="EMBL" id="AK072135">
    <property type="status" value="NOT_ANNOTATED_CDS"/>
    <property type="molecule type" value="mRNA"/>
</dbReference>
<dbReference type="RefSeq" id="XP_015628264.1">
    <property type="nucleotide sequence ID" value="XM_015772778.1"/>
</dbReference>
<dbReference type="SMR" id="Q8H8V7"/>
<dbReference type="FunCoup" id="Q8H8V7">
    <property type="interactions" value="34"/>
</dbReference>
<dbReference type="STRING" id="39947.Q8H8V7"/>
<dbReference type="PaxDb" id="39947-Q8H8V7"/>
<dbReference type="EnsemblPlants" id="Os03t0281900-01">
    <property type="protein sequence ID" value="Os03t0281900-01"/>
    <property type="gene ID" value="Os03g0281900"/>
</dbReference>
<dbReference type="Gramene" id="Os03t0281900-01">
    <property type="protein sequence ID" value="Os03t0281900-01"/>
    <property type="gene ID" value="Os03g0281900"/>
</dbReference>
<dbReference type="KEGG" id="dosa:Os03g0281900"/>
<dbReference type="eggNOG" id="KOG0061">
    <property type="taxonomic scope" value="Eukaryota"/>
</dbReference>
<dbReference type="HOGENOM" id="CLU_000604_57_8_1"/>
<dbReference type="InParanoid" id="Q8H8V7"/>
<dbReference type="OMA" id="AGQMCTG"/>
<dbReference type="OrthoDB" id="66620at2759"/>
<dbReference type="Proteomes" id="UP000000763">
    <property type="component" value="Chromosome 3"/>
</dbReference>
<dbReference type="Proteomes" id="UP000007752">
    <property type="component" value="Chromosome 3"/>
</dbReference>
<dbReference type="Proteomes" id="UP000059680">
    <property type="component" value="Chromosome 3"/>
</dbReference>
<dbReference type="GO" id="GO:0048226">
    <property type="term" value="C:Casparian strip"/>
    <property type="evidence" value="ECO:0000315"/>
    <property type="project" value="UniProtKB"/>
</dbReference>
<dbReference type="GO" id="GO:0016020">
    <property type="term" value="C:membrane"/>
    <property type="evidence" value="ECO:0000318"/>
    <property type="project" value="GO_Central"/>
</dbReference>
<dbReference type="GO" id="GO:0005886">
    <property type="term" value="C:plasma membrane"/>
    <property type="evidence" value="ECO:0000314"/>
    <property type="project" value="UniProtKB"/>
</dbReference>
<dbReference type="GO" id="GO:0048225">
    <property type="term" value="C:suberin network"/>
    <property type="evidence" value="ECO:0000315"/>
    <property type="project" value="UniProtKB"/>
</dbReference>
<dbReference type="GO" id="GO:0140359">
    <property type="term" value="F:ABC-type transporter activity"/>
    <property type="evidence" value="ECO:0007669"/>
    <property type="project" value="InterPro"/>
</dbReference>
<dbReference type="GO" id="GO:0005524">
    <property type="term" value="F:ATP binding"/>
    <property type="evidence" value="ECO:0007669"/>
    <property type="project" value="UniProtKB-KW"/>
</dbReference>
<dbReference type="GO" id="GO:0016887">
    <property type="term" value="F:ATP hydrolysis activity"/>
    <property type="evidence" value="ECO:0007669"/>
    <property type="project" value="InterPro"/>
</dbReference>
<dbReference type="GO" id="GO:0042626">
    <property type="term" value="F:ATPase-coupled transmembrane transporter activity"/>
    <property type="evidence" value="ECO:0000318"/>
    <property type="project" value="GO_Central"/>
</dbReference>
<dbReference type="GO" id="GO:0071456">
    <property type="term" value="P:cellular response to hypoxia"/>
    <property type="evidence" value="ECO:0000270"/>
    <property type="project" value="UniProtKB"/>
</dbReference>
<dbReference type="GO" id="GO:0071470">
    <property type="term" value="P:cellular response to osmotic stress"/>
    <property type="evidence" value="ECO:0000270"/>
    <property type="project" value="UniProtKB"/>
</dbReference>
<dbReference type="GO" id="GO:0071472">
    <property type="term" value="P:cellular response to salt stress"/>
    <property type="evidence" value="ECO:0000270"/>
    <property type="project" value="UniProtKB"/>
</dbReference>
<dbReference type="GO" id="GO:1901002">
    <property type="term" value="P:positive regulation of response to salt stress"/>
    <property type="evidence" value="ECO:0000315"/>
    <property type="project" value="UniProtKB"/>
</dbReference>
<dbReference type="GO" id="GO:0055075">
    <property type="term" value="P:potassium ion homeostasis"/>
    <property type="evidence" value="ECO:0000315"/>
    <property type="project" value="UniProtKB"/>
</dbReference>
<dbReference type="GO" id="GO:2000032">
    <property type="term" value="P:regulation of secondary shoot formation"/>
    <property type="evidence" value="ECO:0000315"/>
    <property type="project" value="UniProtKB"/>
</dbReference>
<dbReference type="GO" id="GO:0009737">
    <property type="term" value="P:response to abscisic acid"/>
    <property type="evidence" value="ECO:0000270"/>
    <property type="project" value="UniProtKB"/>
</dbReference>
<dbReference type="GO" id="GO:0009733">
    <property type="term" value="P:response to auxin"/>
    <property type="evidence" value="ECO:0000270"/>
    <property type="project" value="UniProtKB"/>
</dbReference>
<dbReference type="GO" id="GO:0009739">
    <property type="term" value="P:response to gibberellin"/>
    <property type="evidence" value="ECO:0000270"/>
    <property type="project" value="UniProtKB"/>
</dbReference>
<dbReference type="GO" id="GO:0009408">
    <property type="term" value="P:response to heat"/>
    <property type="evidence" value="ECO:0000270"/>
    <property type="project" value="UniProtKB"/>
</dbReference>
<dbReference type="GO" id="GO:0009753">
    <property type="term" value="P:response to jasmonic acid"/>
    <property type="evidence" value="ECO:0000270"/>
    <property type="project" value="UniProtKB"/>
</dbReference>
<dbReference type="GO" id="GO:0009751">
    <property type="term" value="P:response to salicylic acid"/>
    <property type="evidence" value="ECO:0000270"/>
    <property type="project" value="UniProtKB"/>
</dbReference>
<dbReference type="GO" id="GO:1902074">
    <property type="term" value="P:response to salt"/>
    <property type="evidence" value="ECO:0000270"/>
    <property type="project" value="UniProtKB"/>
</dbReference>
<dbReference type="GO" id="GO:0055078">
    <property type="term" value="P:sodium ion homeostasis"/>
    <property type="evidence" value="ECO:0000315"/>
    <property type="project" value="UniProtKB"/>
</dbReference>
<dbReference type="GO" id="GO:0010345">
    <property type="term" value="P:suberin biosynthetic process"/>
    <property type="evidence" value="ECO:0000270"/>
    <property type="project" value="UniProtKB"/>
</dbReference>
<dbReference type="GO" id="GO:0055085">
    <property type="term" value="P:transmembrane transport"/>
    <property type="evidence" value="ECO:0000318"/>
    <property type="project" value="GO_Central"/>
</dbReference>
<dbReference type="FunFam" id="3.40.50.300:FF:000530">
    <property type="entry name" value="ABC transporter G family member 6"/>
    <property type="match status" value="1"/>
</dbReference>
<dbReference type="Gene3D" id="3.40.50.300">
    <property type="entry name" value="P-loop containing nucleotide triphosphate hydrolases"/>
    <property type="match status" value="1"/>
</dbReference>
<dbReference type="InterPro" id="IPR003593">
    <property type="entry name" value="AAA+_ATPase"/>
</dbReference>
<dbReference type="InterPro" id="IPR013525">
    <property type="entry name" value="ABC2_TM"/>
</dbReference>
<dbReference type="InterPro" id="IPR003439">
    <property type="entry name" value="ABC_transporter-like_ATP-bd"/>
</dbReference>
<dbReference type="InterPro" id="IPR017871">
    <property type="entry name" value="ABC_transporter-like_CS"/>
</dbReference>
<dbReference type="InterPro" id="IPR043926">
    <property type="entry name" value="ABCG_dom"/>
</dbReference>
<dbReference type="InterPro" id="IPR050352">
    <property type="entry name" value="ABCG_transporters"/>
</dbReference>
<dbReference type="InterPro" id="IPR027417">
    <property type="entry name" value="P-loop_NTPase"/>
</dbReference>
<dbReference type="PANTHER" id="PTHR48041:SF11">
    <property type="entry name" value="ABC TRANSPORTER G FAMILY MEMBER 16"/>
    <property type="match status" value="1"/>
</dbReference>
<dbReference type="PANTHER" id="PTHR48041">
    <property type="entry name" value="ABC TRANSPORTER G FAMILY MEMBER 28"/>
    <property type="match status" value="1"/>
</dbReference>
<dbReference type="Pfam" id="PF01061">
    <property type="entry name" value="ABC2_membrane"/>
    <property type="match status" value="1"/>
</dbReference>
<dbReference type="Pfam" id="PF19055">
    <property type="entry name" value="ABC2_membrane_7"/>
    <property type="match status" value="1"/>
</dbReference>
<dbReference type="Pfam" id="PF00005">
    <property type="entry name" value="ABC_tran"/>
    <property type="match status" value="1"/>
</dbReference>
<dbReference type="SMART" id="SM00382">
    <property type="entry name" value="AAA"/>
    <property type="match status" value="1"/>
</dbReference>
<dbReference type="SUPFAM" id="SSF52540">
    <property type="entry name" value="P-loop containing nucleoside triphosphate hydrolases"/>
    <property type="match status" value="1"/>
</dbReference>
<dbReference type="PROSITE" id="PS00211">
    <property type="entry name" value="ABC_TRANSPORTER_1"/>
    <property type="match status" value="1"/>
</dbReference>
<dbReference type="PROSITE" id="PS50893">
    <property type="entry name" value="ABC_TRANSPORTER_2"/>
    <property type="match status" value="1"/>
</dbReference>
<comment type="function">
    <text evidence="5 7 8 13">Essential transporter for growth and development under abiotic stress (PubMed:22996334). Mediates shoot branching by promoting the outgrowth of lateral shoots (PubMed:19140940). Required for salt tolerance via Na/K homeostasis, at least partly by regulating SKC1/OsHKT1;5 (PubMed:24908511). Necessary for hypodermal suberization of roots, which contributes to formation of the apoplastic barrier (PubMed:25041515).</text>
</comment>
<comment type="subcellular location">
    <subcellularLocation>
        <location evidence="8">Cell membrane</location>
        <topology evidence="1">Multi-pass membrane protein</topology>
    </subcellularLocation>
</comment>
<comment type="tissue specificity">
    <text evidence="5">Expressed in the crown root primordia, endodermis, pericycle and stele in the root, in leaf primordia of main and axillary shoots, and in the vascular cells and leaf epidermis of older leaves.</text>
</comment>
<comment type="induction">
    <text evidence="6 7 8">Strongly up-regulated in roots after exposure to salt and osmotic stresses (PubMed:24908511). Induced in roots by benzylaminopurine (BAP), abscisic acid (ABA) and salicylic acid (SA) (PubMed:22996334). Accumulates in shoots upon heat (e.g. 42 degrees Celsius) (PubMed:22996334). Repressed in roots by NaCl, jasmonic acid (JA), gibberellic acid (GA) and auxin (IAA) (PubMed:22996334). Accumulates in most hypodermal and some endodermal roots cells under stagnant deoxygenated conditions leading to hypoxia (PubMed:25041515).</text>
</comment>
<comment type="similarity">
    <text evidence="12">Belongs to the ABC transporter superfamily. ABCG family. Eye pigment precursor importer (TC 3.A.1.204) subfamily.</text>
</comment>
<comment type="sequence caution" evidence="12">
    <conflict type="frameshift">
        <sequence resource="EMBL" id="AK072135"/>
    </conflict>
</comment>
<proteinExistence type="evidence at protein level"/>
<reference key="1">
    <citation type="journal article" date="2005" name="Genome Res.">
        <title>Sequence, annotation, and analysis of synteny between rice chromosome 3 and diverged grass species.</title>
        <authorList>
            <consortium name="The rice chromosome 3 sequencing consortium"/>
            <person name="Buell C.R."/>
            <person name="Yuan Q."/>
            <person name="Ouyang S."/>
            <person name="Liu J."/>
            <person name="Zhu W."/>
            <person name="Wang A."/>
            <person name="Maiti R."/>
            <person name="Haas B."/>
            <person name="Wortman J."/>
            <person name="Pertea M."/>
            <person name="Jones K.M."/>
            <person name="Kim M."/>
            <person name="Overton L."/>
            <person name="Tsitrin T."/>
            <person name="Fadrosh D."/>
            <person name="Bera J."/>
            <person name="Weaver B."/>
            <person name="Jin S."/>
            <person name="Johri S."/>
            <person name="Reardon M."/>
            <person name="Webb K."/>
            <person name="Hill J."/>
            <person name="Moffat K."/>
            <person name="Tallon L."/>
            <person name="Van Aken S."/>
            <person name="Lewis M."/>
            <person name="Utterback T."/>
            <person name="Feldblyum T."/>
            <person name="Zismann V."/>
            <person name="Iobst S."/>
            <person name="Hsiao J."/>
            <person name="de Vazeille A.R."/>
            <person name="Salzberg S.L."/>
            <person name="White O."/>
            <person name="Fraser C.M."/>
            <person name="Yu Y."/>
            <person name="Kim H."/>
            <person name="Rambo T."/>
            <person name="Currie J."/>
            <person name="Collura K."/>
            <person name="Kernodle-Thompson S."/>
            <person name="Wei F."/>
            <person name="Kudrna K."/>
            <person name="Ammiraju J.S.S."/>
            <person name="Luo M."/>
            <person name="Goicoechea J.L."/>
            <person name="Wing R.A."/>
            <person name="Henry D."/>
            <person name="Oates R."/>
            <person name="Palmer M."/>
            <person name="Pries G."/>
            <person name="Saski C."/>
            <person name="Simmons J."/>
            <person name="Soderlund C."/>
            <person name="Nelson W."/>
            <person name="de la Bastide M."/>
            <person name="Spiegel L."/>
            <person name="Nascimento L."/>
            <person name="Huang E."/>
            <person name="Preston R."/>
            <person name="Zutavern T."/>
            <person name="Palmer L."/>
            <person name="O'Shaughnessy A."/>
            <person name="Dike S."/>
            <person name="McCombie W.R."/>
            <person name="Minx P."/>
            <person name="Cordum H."/>
            <person name="Wilson R."/>
            <person name="Jin W."/>
            <person name="Lee H.R."/>
            <person name="Jiang J."/>
            <person name="Jackson S."/>
        </authorList>
    </citation>
    <scope>NUCLEOTIDE SEQUENCE [LARGE SCALE GENOMIC DNA]</scope>
    <source>
        <strain>cv. Nipponbare</strain>
    </source>
</reference>
<reference key="2">
    <citation type="journal article" date="2005" name="Nature">
        <title>The map-based sequence of the rice genome.</title>
        <authorList>
            <consortium name="International rice genome sequencing project (IRGSP)"/>
        </authorList>
    </citation>
    <scope>NUCLEOTIDE SEQUENCE [LARGE SCALE GENOMIC DNA]</scope>
    <source>
        <strain>cv. Nipponbare</strain>
    </source>
</reference>
<reference key="3">
    <citation type="journal article" date="2008" name="Nucleic Acids Res.">
        <title>The rice annotation project database (RAP-DB): 2008 update.</title>
        <authorList>
            <consortium name="The rice annotation project (RAP)"/>
        </authorList>
    </citation>
    <scope>GENOME REANNOTATION</scope>
    <source>
        <strain>cv. Nipponbare</strain>
    </source>
</reference>
<reference key="4">
    <citation type="journal article" date="2013" name="Rice">
        <title>Improvement of the Oryza sativa Nipponbare reference genome using next generation sequence and optical map data.</title>
        <authorList>
            <person name="Kawahara Y."/>
            <person name="de la Bastide M."/>
            <person name="Hamilton J.P."/>
            <person name="Kanamori H."/>
            <person name="McCombie W.R."/>
            <person name="Ouyang S."/>
            <person name="Schwartz D.C."/>
            <person name="Tanaka T."/>
            <person name="Wu J."/>
            <person name="Zhou S."/>
            <person name="Childs K.L."/>
            <person name="Davidson R.M."/>
            <person name="Lin H."/>
            <person name="Quesada-Ocampo L."/>
            <person name="Vaillancourt B."/>
            <person name="Sakai H."/>
            <person name="Lee S.S."/>
            <person name="Kim J."/>
            <person name="Numa H."/>
            <person name="Itoh T."/>
            <person name="Buell C.R."/>
            <person name="Matsumoto T."/>
        </authorList>
    </citation>
    <scope>GENOME REANNOTATION</scope>
    <source>
        <strain>cv. Nipponbare</strain>
    </source>
</reference>
<reference key="5">
    <citation type="journal article" date="2005" name="PLoS Biol.">
        <title>The genomes of Oryza sativa: a history of duplications.</title>
        <authorList>
            <person name="Yu J."/>
            <person name="Wang J."/>
            <person name="Lin W."/>
            <person name="Li S."/>
            <person name="Li H."/>
            <person name="Zhou J."/>
            <person name="Ni P."/>
            <person name="Dong W."/>
            <person name="Hu S."/>
            <person name="Zeng C."/>
            <person name="Zhang J."/>
            <person name="Zhang Y."/>
            <person name="Li R."/>
            <person name="Xu Z."/>
            <person name="Li S."/>
            <person name="Li X."/>
            <person name="Zheng H."/>
            <person name="Cong L."/>
            <person name="Lin L."/>
            <person name="Yin J."/>
            <person name="Geng J."/>
            <person name="Li G."/>
            <person name="Shi J."/>
            <person name="Liu J."/>
            <person name="Lv H."/>
            <person name="Li J."/>
            <person name="Wang J."/>
            <person name="Deng Y."/>
            <person name="Ran L."/>
            <person name="Shi X."/>
            <person name="Wang X."/>
            <person name="Wu Q."/>
            <person name="Li C."/>
            <person name="Ren X."/>
            <person name="Wang J."/>
            <person name="Wang X."/>
            <person name="Li D."/>
            <person name="Liu D."/>
            <person name="Zhang X."/>
            <person name="Ji Z."/>
            <person name="Zhao W."/>
            <person name="Sun Y."/>
            <person name="Zhang Z."/>
            <person name="Bao J."/>
            <person name="Han Y."/>
            <person name="Dong L."/>
            <person name="Ji J."/>
            <person name="Chen P."/>
            <person name="Wu S."/>
            <person name="Liu J."/>
            <person name="Xiao Y."/>
            <person name="Bu D."/>
            <person name="Tan J."/>
            <person name="Yang L."/>
            <person name="Ye C."/>
            <person name="Zhang J."/>
            <person name="Xu J."/>
            <person name="Zhou Y."/>
            <person name="Yu Y."/>
            <person name="Zhang B."/>
            <person name="Zhuang S."/>
            <person name="Wei H."/>
            <person name="Liu B."/>
            <person name="Lei M."/>
            <person name="Yu H."/>
            <person name="Li Y."/>
            <person name="Xu H."/>
            <person name="Wei S."/>
            <person name="He X."/>
            <person name="Fang L."/>
            <person name="Zhang Z."/>
            <person name="Zhang Y."/>
            <person name="Huang X."/>
            <person name="Su Z."/>
            <person name="Tong W."/>
            <person name="Li J."/>
            <person name="Tong Z."/>
            <person name="Li S."/>
            <person name="Ye J."/>
            <person name="Wang L."/>
            <person name="Fang L."/>
            <person name="Lei T."/>
            <person name="Chen C.-S."/>
            <person name="Chen H.-C."/>
            <person name="Xu Z."/>
            <person name="Li H."/>
            <person name="Huang H."/>
            <person name="Zhang F."/>
            <person name="Xu H."/>
            <person name="Li N."/>
            <person name="Zhao C."/>
            <person name="Li S."/>
            <person name="Dong L."/>
            <person name="Huang Y."/>
            <person name="Li L."/>
            <person name="Xi Y."/>
            <person name="Qi Q."/>
            <person name="Li W."/>
            <person name="Zhang B."/>
            <person name="Hu W."/>
            <person name="Zhang Y."/>
            <person name="Tian X."/>
            <person name="Jiao Y."/>
            <person name="Liang X."/>
            <person name="Jin J."/>
            <person name="Gao L."/>
            <person name="Zheng W."/>
            <person name="Hao B."/>
            <person name="Liu S.-M."/>
            <person name="Wang W."/>
            <person name="Yuan L."/>
            <person name="Cao M."/>
            <person name="McDermott J."/>
            <person name="Samudrala R."/>
            <person name="Wang J."/>
            <person name="Wong G.K.-S."/>
            <person name="Yang H."/>
        </authorList>
    </citation>
    <scope>NUCLEOTIDE SEQUENCE [LARGE SCALE GENOMIC DNA]</scope>
    <source>
        <strain>cv. Nipponbare</strain>
    </source>
</reference>
<reference key="6">
    <citation type="journal article" date="2003" name="Science">
        <title>Collection, mapping, and annotation of over 28,000 cDNA clones from japonica rice.</title>
        <authorList>
            <consortium name="The rice full-length cDNA consortium"/>
        </authorList>
    </citation>
    <scope>NUCLEOTIDE SEQUENCE [LARGE SCALE MRNA]</scope>
    <source>
        <strain>cv. Nipponbare</strain>
    </source>
</reference>
<reference key="7">
    <citation type="journal article" date="2008" name="Trends Plant Sci.">
        <title>Plant ABC proteins - a unified nomenclature and updated inventory.</title>
        <authorList>
            <person name="Verrier P.J."/>
            <person name="Bird D."/>
            <person name="Burla B."/>
            <person name="Dassa E."/>
            <person name="Forestier C."/>
            <person name="Geisler M."/>
            <person name="Klein M."/>
            <person name="Kolukisaoglu H.U."/>
            <person name="Lee Y."/>
            <person name="Martinoia E."/>
            <person name="Murphy A."/>
            <person name="Rea P.A."/>
            <person name="Samuels L."/>
            <person name="Schulz B."/>
            <person name="Spalding E.J."/>
            <person name="Yazaki K."/>
            <person name="Theodoulou F.L."/>
        </authorList>
    </citation>
    <scope>GENE FAMILY</scope>
    <scope>NOMENCLATURE</scope>
</reference>
<reference key="8">
    <citation type="journal article" date="2009" name="New Phytol.">
        <title>Rice shoot branching requires an ATP-binding cassette subfamily G protein.</title>
        <authorList>
            <person name="Yasuno N."/>
            <person name="Takamure I."/>
            <person name="Kidou S."/>
            <person name="Tokuji Y."/>
            <person name="Ureshi A.N."/>
            <person name="Funabiki A."/>
            <person name="Ashikaga K."/>
            <person name="Yamanouchi U."/>
            <person name="Yano M."/>
            <person name="Kato K."/>
        </authorList>
    </citation>
    <scope>FUNCTION</scope>
    <scope>TISSUE SPECIFICITY</scope>
    <scope>MUTAGENESIS OF ARG-488 AND ALA-685</scope>
    <source>
        <strain>cv. Akamuro</strain>
        <strain>cv. Shiokari</strain>
    </source>
</reference>
<reference key="9">
    <citation type="journal article" date="2012" name="Mol. Genet. Genomics">
        <title>Genome-wide analysis and expression profiling of half-size ABC protein subgroup G in rice in response to abiotic stress and phytohormone treatments.</title>
        <authorList>
            <person name="Matsuda S."/>
            <person name="Funabiki A."/>
            <person name="Furukawa K."/>
            <person name="Komori N."/>
            <person name="Koike M."/>
            <person name="Tokuji Y."/>
            <person name="Takamure I."/>
            <person name="Kato K."/>
        </authorList>
    </citation>
    <scope>FUNCTION</scope>
    <scope>INDUCTION BY BIOTIC AND ABIOTIC STRESSES</scope>
    <scope>GENE FAMILY</scope>
    <scope>NOMENCLATURE</scope>
    <source>
        <strain>cv. Shiokari</strain>
    </source>
</reference>
<reference key="10">
    <citation type="journal article" date="2014" name="Plant J.">
        <title>RCN1/OsABCG5, an ATP-binding cassette (ABC) transporter, is required for hypodermal suberization of roots in rice (Oryza sativa).</title>
        <authorList>
            <person name="Shiono K."/>
            <person name="Ando M."/>
            <person name="Nishiuchi S."/>
            <person name="Takahashi H."/>
            <person name="Watanabe K."/>
            <person name="Nakamura M."/>
            <person name="Matsuo Y."/>
            <person name="Yasuno N."/>
            <person name="Yamanouchi U."/>
            <person name="Fujimoto M."/>
            <person name="Takanashi H."/>
            <person name="Ranathunge K."/>
            <person name="Franke R.B."/>
            <person name="Shitan N."/>
            <person name="Nishizawa N.K."/>
            <person name="Takamure I."/>
            <person name="Yano M."/>
            <person name="Tsutsumi N."/>
            <person name="Schreiber L."/>
            <person name="Yazaki K."/>
            <person name="Nakazono M."/>
            <person name="Kato K."/>
        </authorList>
    </citation>
    <scope>FUNCTION</scope>
    <scope>MUTAGENESIS OF ARG-488 AND ALA-685</scope>
    <scope>INDUCTION BY DEOXYGENATED CONDITIONS</scope>
    <scope>SUBCELLULAR LOCATION</scope>
    <source>
        <strain>cv. Akamuro</strain>
        <strain>cv. Shiokari</strain>
    </source>
</reference>
<reference key="11">
    <citation type="journal article" date="2014" name="Plant Sci.">
        <title>Rice RCN1/OsABCG5 mutation alters accumulation of essential and nonessential minerals and causes a high Na/K ratio, resulting in a salt-sensitive phenotype.</title>
        <authorList>
            <person name="Matsuda S."/>
            <person name="Nagasawa H."/>
            <person name="Yamashiro N."/>
            <person name="Yasuno N."/>
            <person name="Watanabe T."/>
            <person name="Kitazawa H."/>
            <person name="Takano S."/>
            <person name="Tokuji Y."/>
            <person name="Tani M."/>
            <person name="Takamure I."/>
            <person name="Kato K."/>
        </authorList>
    </citation>
    <scope>FUNCTION</scope>
    <scope>MUTAGENESIS OF ALA-685</scope>
    <scope>INDUCTION BY SALT AND OSMOTIC STRESSES</scope>
    <source>
        <strain>cv. Shiokari</strain>
    </source>
</reference>
<gene>
    <name evidence="10" type="primary">RCN1</name>
    <name evidence="11" type="synonym">WBC5</name>
    <name evidence="14" type="ordered locus">LOC_Os03g17350</name>
    <name evidence="15" type="ordered locus">Os03g0281900</name>
    <name evidence="16" type="ORF">OsJ_10379</name>
</gene>
<evidence type="ECO:0000255" key="1"/>
<evidence type="ECO:0000255" key="2">
    <source>
        <dbReference type="PROSITE-ProRule" id="PRU00434"/>
    </source>
</evidence>
<evidence type="ECO:0000255" key="3">
    <source>
        <dbReference type="PROSITE-ProRule" id="PRU00442"/>
    </source>
</evidence>
<evidence type="ECO:0000256" key="4">
    <source>
        <dbReference type="SAM" id="MobiDB-lite"/>
    </source>
</evidence>
<evidence type="ECO:0000269" key="5">
    <source>
    </source>
</evidence>
<evidence type="ECO:0000269" key="6">
    <source>
    </source>
</evidence>
<evidence type="ECO:0000269" key="7">
    <source>
    </source>
</evidence>
<evidence type="ECO:0000269" key="8">
    <source>
    </source>
</evidence>
<evidence type="ECO:0000303" key="9">
    <source>
    </source>
</evidence>
<evidence type="ECO:0000303" key="10">
    <source>
    </source>
</evidence>
<evidence type="ECO:0000303" key="11">
    <source>
    </source>
</evidence>
<evidence type="ECO:0000305" key="12"/>
<evidence type="ECO:0000305" key="13">
    <source>
    </source>
</evidence>
<evidence type="ECO:0000312" key="14">
    <source>
        <dbReference type="EMBL" id="ABF95316.1"/>
    </source>
</evidence>
<evidence type="ECO:0000312" key="15">
    <source>
        <dbReference type="EMBL" id="BAF11660.1"/>
    </source>
</evidence>
<evidence type="ECO:0000312" key="16">
    <source>
        <dbReference type="EMBL" id="EAZ26487.1"/>
    </source>
</evidence>
<evidence type="ECO:0000312" key="17">
    <source>
        <dbReference type="Proteomes" id="UP000059680"/>
    </source>
</evidence>
<feature type="chain" id="PRO_0000430947" description="ABC transporter G family member 5">
    <location>
        <begin position="1"/>
        <end position="787"/>
    </location>
</feature>
<feature type="transmembrane region" description="Helical; Name=1" evidence="1">
    <location>
        <begin position="500"/>
        <end position="520"/>
    </location>
</feature>
<feature type="transmembrane region" description="Helical; Name=2" evidence="1">
    <location>
        <begin position="535"/>
        <end position="555"/>
    </location>
</feature>
<feature type="transmembrane region" description="Helical; Name=3" evidence="1">
    <location>
        <begin position="576"/>
        <end position="596"/>
    </location>
</feature>
<feature type="transmembrane region" description="Helical; Name=4" evidence="1">
    <location>
        <begin position="599"/>
        <end position="619"/>
    </location>
</feature>
<feature type="transmembrane region" description="Helical; Name=5" evidence="1">
    <location>
        <begin position="620"/>
        <end position="640"/>
    </location>
</feature>
<feature type="transmembrane region" description="Helical; Name=6" evidence="1">
    <location>
        <begin position="641"/>
        <end position="661"/>
    </location>
</feature>
<feature type="transmembrane region" description="Helical; Name=7" evidence="1">
    <location>
        <begin position="728"/>
        <end position="745"/>
    </location>
</feature>
<feature type="transmembrane region" description="Helical; Name=8" evidence="1">
    <location>
        <begin position="760"/>
        <end position="780"/>
    </location>
</feature>
<feature type="domain" description="ABC transporter" evidence="2">
    <location>
        <begin position="121"/>
        <end position="382"/>
    </location>
</feature>
<feature type="domain" description="ABC transmembrane type-2" evidence="3">
    <location>
        <begin position="484"/>
        <end position="691"/>
    </location>
</feature>
<feature type="region of interest" description="Disordered" evidence="4">
    <location>
        <begin position="1"/>
        <end position="25"/>
    </location>
</feature>
<feature type="region of interest" description="Disordered" evidence="4">
    <location>
        <begin position="71"/>
        <end position="116"/>
    </location>
</feature>
<feature type="compositionally biased region" description="Basic and acidic residues" evidence="4">
    <location>
        <begin position="1"/>
        <end position="17"/>
    </location>
</feature>
<feature type="compositionally biased region" description="Polar residues" evidence="4">
    <location>
        <begin position="74"/>
        <end position="85"/>
    </location>
</feature>
<feature type="binding site" evidence="2">
    <location>
        <begin position="175"/>
        <end position="182"/>
    </location>
    <ligand>
        <name>ATP</name>
        <dbReference type="ChEBI" id="CHEBI:30616"/>
    </ligand>
</feature>
<feature type="mutagenesis site" description="In rcn1-1; altered shoot branching due to impaired outgrowth of tiller buds leading to reduced culm number. Short roots lacking suberized hypodermis in waterlogged soil." evidence="5 8">
    <original>R</original>
    <variation>C</variation>
    <location>
        <position position="488"/>
    </location>
</feature>
<feature type="mutagenesis site" description="In rcn1-2; altered shoot branching due to impaired outgrowth of tiller buds leading to reduced culm number. Short roots lacking suberized hypodermis in waterlogged soil. Disturbed accumulation of essential and nonessential minerals leading to a high Na/K ratio, thus resulting in a salt-sensitive phenotype." evidence="5 7 8">
    <original>A</original>
    <variation>P</variation>
    <location>
        <position position="685"/>
    </location>
</feature>
<feature type="sequence conflict" description="In Ref. 6; AK072135." ref="6">
    <original>I</original>
    <variation>T</variation>
    <location>
        <position position="503"/>
    </location>
</feature>
<name>AB5G_ORYSJ</name>
<sequence length="787" mass="86968">MSRFVDKLPLFDRRPSPMEEAEGLPRSGYLGQLHHHQYYQPHSNMLPLEQSPPTSTKHTSVTLAQLLKRVNDARSGSSTPISSPRYTIELGGSKPESVSSESDDHHSDDGGSEGQPRALVLKFTDLTYSVKQRRKGSCLPFRRAAADEPELPAMRTLLDGISGEARDGEIMAVLGASGSGKSTLIDALANRIAKESLHGSVTINGESIDSNLLKVISAYVRQEDLLYPMLTVEETLMFAAEFRLPRSLPTREKKKRVKELIDQLGLKRAANTIIGDEGHRGVSGGERRRVSIGVDIIHNPIMLFLDEPTSGLDSTSAFMVVTVLKAIAQSGSVVVMSIHQPSYRILGLLDRLLFLSRGKTVYYGPPSELPPFFLDFGKPIPDNENPTEFALDLIKEMETETEGTKRLAEHNAAWQLKHHGEGRGYGGKPGMSLKEAISASISRGKLVSGATDGTVSVAASDHSAPPPSSSSVSKFVNPFWIEMGVLTRRAFINTKRTPEVFIIRLAAVLVTGFILATIFWRLDESPKGVQERLGFFAIAMSTMYYTCSDALPVFLSERYIFLRETAYNAYRRSSYVLSHTIVGFPSLVVLSFAFALTTFFSVGLAGGVNGFFYFVAIVLASFWAGSGFATFLSGVVTHVMLGFPVVLSTLAYFLLFSGFFINRDRIPRYWLWFHYISLVKYPYEAVMQNEFGDPTRCFVRGVQMFDNTPLAALPAAVKVRVLQSMSASLGVNIGTGTCITTGPDFLKQQAITDFGKWECLWITVAWGFLFRILFYISLLLGSRNKRR</sequence>
<organism evidence="17">
    <name type="scientific">Oryza sativa subsp. japonica</name>
    <name type="common">Rice</name>
    <dbReference type="NCBI Taxonomy" id="39947"/>
    <lineage>
        <taxon>Eukaryota</taxon>
        <taxon>Viridiplantae</taxon>
        <taxon>Streptophyta</taxon>
        <taxon>Embryophyta</taxon>
        <taxon>Tracheophyta</taxon>
        <taxon>Spermatophyta</taxon>
        <taxon>Magnoliopsida</taxon>
        <taxon>Liliopsida</taxon>
        <taxon>Poales</taxon>
        <taxon>Poaceae</taxon>
        <taxon>BOP clade</taxon>
        <taxon>Oryzoideae</taxon>
        <taxon>Oryzeae</taxon>
        <taxon>Oryzinae</taxon>
        <taxon>Oryza</taxon>
        <taxon>Oryza sativa</taxon>
    </lineage>
</organism>